<dbReference type="EMBL" id="AP003232">
    <property type="protein sequence ID" value="BAB92272.1"/>
    <property type="molecule type" value="Genomic_DNA"/>
</dbReference>
<dbReference type="EMBL" id="AP008207">
    <property type="protein sequence ID" value="BAF06476.1"/>
    <property type="status" value="ALT_SEQ"/>
    <property type="molecule type" value="Genomic_DNA"/>
</dbReference>
<dbReference type="EMBL" id="AP014957">
    <property type="status" value="NOT_ANNOTATED_CDS"/>
    <property type="molecule type" value="Genomic_DNA"/>
</dbReference>
<dbReference type="EMBL" id="AK111939">
    <property type="status" value="NOT_ANNOTATED_CDS"/>
    <property type="molecule type" value="mRNA"/>
</dbReference>
<dbReference type="RefSeq" id="XP_015621262.1">
    <property type="nucleotide sequence ID" value="XM_015765776.1"/>
</dbReference>
<dbReference type="SMR" id="Q0JIF2"/>
<dbReference type="FunCoup" id="Q0JIF2">
    <property type="interactions" value="1143"/>
</dbReference>
<dbReference type="STRING" id="39947.Q0JIF2"/>
<dbReference type="PaxDb" id="39947-Q0JIF2"/>
<dbReference type="EnsemblPlants" id="Os01t0805600-02">
    <property type="protein sequence ID" value="Os01t0805600-02"/>
    <property type="gene ID" value="Os01g0805600"/>
</dbReference>
<dbReference type="Gramene" id="Os01t0805600-02">
    <property type="protein sequence ID" value="Os01t0805600-02"/>
    <property type="gene ID" value="Os01g0805600"/>
</dbReference>
<dbReference type="KEGG" id="dosa:Os01g0805600"/>
<dbReference type="eggNOG" id="KOG0653">
    <property type="taxonomic scope" value="Eukaryota"/>
</dbReference>
<dbReference type="HOGENOM" id="CLU_020695_2_4_1"/>
<dbReference type="InParanoid" id="Q0JIF2"/>
<dbReference type="OrthoDB" id="5590282at2759"/>
<dbReference type="PlantReactome" id="R-OSA-9630286">
    <property type="pathway name" value="Cell cycle regulation"/>
</dbReference>
<dbReference type="Proteomes" id="UP000000763">
    <property type="component" value="Chromosome 1"/>
</dbReference>
<dbReference type="Proteomes" id="UP000059680">
    <property type="component" value="Chromosome 1"/>
</dbReference>
<dbReference type="GO" id="GO:0000307">
    <property type="term" value="C:cyclin-dependent protein kinase holoenzyme complex"/>
    <property type="evidence" value="ECO:0000318"/>
    <property type="project" value="GO_Central"/>
</dbReference>
<dbReference type="GO" id="GO:0005737">
    <property type="term" value="C:cytoplasm"/>
    <property type="evidence" value="ECO:0000318"/>
    <property type="project" value="GO_Central"/>
</dbReference>
<dbReference type="GO" id="GO:0005634">
    <property type="term" value="C:nucleus"/>
    <property type="evidence" value="ECO:0000318"/>
    <property type="project" value="GO_Central"/>
</dbReference>
<dbReference type="GO" id="GO:0016538">
    <property type="term" value="F:cyclin-dependent protein serine/threonine kinase regulator activity"/>
    <property type="evidence" value="ECO:0000318"/>
    <property type="project" value="GO_Central"/>
</dbReference>
<dbReference type="GO" id="GO:0051301">
    <property type="term" value="P:cell division"/>
    <property type="evidence" value="ECO:0007669"/>
    <property type="project" value="UniProtKB-KW"/>
</dbReference>
<dbReference type="GO" id="GO:0000082">
    <property type="term" value="P:G1/S transition of mitotic cell cycle"/>
    <property type="evidence" value="ECO:0000318"/>
    <property type="project" value="GO_Central"/>
</dbReference>
<dbReference type="CDD" id="cd20567">
    <property type="entry name" value="CYCLIN_AtCycB-like_rpt1"/>
    <property type="match status" value="1"/>
</dbReference>
<dbReference type="FunFam" id="1.10.472.10:FF:000001">
    <property type="entry name" value="G2/mitotic-specific cyclin"/>
    <property type="match status" value="1"/>
</dbReference>
<dbReference type="FunFam" id="1.10.472.10:FF:000032">
    <property type="entry name" value="G2/mitotic-specific cyclin-1"/>
    <property type="match status" value="1"/>
</dbReference>
<dbReference type="Gene3D" id="1.10.472.10">
    <property type="entry name" value="Cyclin-like"/>
    <property type="match status" value="2"/>
</dbReference>
<dbReference type="InterPro" id="IPR039361">
    <property type="entry name" value="Cyclin"/>
</dbReference>
<dbReference type="InterPro" id="IPR013763">
    <property type="entry name" value="Cyclin-like_dom"/>
</dbReference>
<dbReference type="InterPro" id="IPR036915">
    <property type="entry name" value="Cyclin-like_sf"/>
</dbReference>
<dbReference type="InterPro" id="IPR046965">
    <property type="entry name" value="Cyclin_A/B-like"/>
</dbReference>
<dbReference type="InterPro" id="IPR004367">
    <property type="entry name" value="Cyclin_C-dom"/>
</dbReference>
<dbReference type="InterPro" id="IPR006671">
    <property type="entry name" value="Cyclin_N"/>
</dbReference>
<dbReference type="InterPro" id="IPR048258">
    <property type="entry name" value="Cyclins_cyclin-box"/>
</dbReference>
<dbReference type="PANTHER" id="PTHR10177">
    <property type="entry name" value="CYCLINS"/>
    <property type="match status" value="1"/>
</dbReference>
<dbReference type="Pfam" id="PF02984">
    <property type="entry name" value="Cyclin_C"/>
    <property type="match status" value="1"/>
</dbReference>
<dbReference type="Pfam" id="PF00134">
    <property type="entry name" value="Cyclin_N"/>
    <property type="match status" value="1"/>
</dbReference>
<dbReference type="PIRSF" id="PIRSF001771">
    <property type="entry name" value="Cyclin_A_B_D_E"/>
    <property type="match status" value="1"/>
</dbReference>
<dbReference type="SMART" id="SM00385">
    <property type="entry name" value="CYCLIN"/>
    <property type="match status" value="2"/>
</dbReference>
<dbReference type="SMART" id="SM01332">
    <property type="entry name" value="Cyclin_C"/>
    <property type="match status" value="1"/>
</dbReference>
<dbReference type="SUPFAM" id="SSF47954">
    <property type="entry name" value="Cyclin-like"/>
    <property type="match status" value="2"/>
</dbReference>
<dbReference type="PROSITE" id="PS00292">
    <property type="entry name" value="CYCLINS"/>
    <property type="match status" value="1"/>
</dbReference>
<protein>
    <recommendedName>
        <fullName>Cyclin-B1-1</fullName>
    </recommendedName>
    <alternativeName>
        <fullName>G2/mitotic-specific cyclin-B1-1</fullName>
        <shortName>CycB1;1</shortName>
    </alternativeName>
</protein>
<evidence type="ECO:0000256" key="1">
    <source>
        <dbReference type="SAM" id="MobiDB-lite"/>
    </source>
</evidence>
<evidence type="ECO:0000305" key="2"/>
<proteinExistence type="evidence at transcript level"/>
<feature type="chain" id="PRO_0000287008" description="Cyclin-B1-1">
    <location>
        <begin position="1"/>
        <end position="449"/>
    </location>
</feature>
<feature type="region of interest" description="Disordered" evidence="1">
    <location>
        <begin position="1"/>
        <end position="34"/>
    </location>
</feature>
<feature type="region of interest" description="Disordered" evidence="1">
    <location>
        <begin position="90"/>
        <end position="143"/>
    </location>
</feature>
<feature type="compositionally biased region" description="Low complexity" evidence="1">
    <location>
        <begin position="90"/>
        <end position="102"/>
    </location>
</feature>
<feature type="compositionally biased region" description="Low complexity" evidence="1">
    <location>
        <begin position="121"/>
        <end position="134"/>
    </location>
</feature>
<organism>
    <name type="scientific">Oryza sativa subsp. japonica</name>
    <name type="common">Rice</name>
    <dbReference type="NCBI Taxonomy" id="39947"/>
    <lineage>
        <taxon>Eukaryota</taxon>
        <taxon>Viridiplantae</taxon>
        <taxon>Streptophyta</taxon>
        <taxon>Embryophyta</taxon>
        <taxon>Tracheophyta</taxon>
        <taxon>Spermatophyta</taxon>
        <taxon>Magnoliopsida</taxon>
        <taxon>Liliopsida</taxon>
        <taxon>Poales</taxon>
        <taxon>Poaceae</taxon>
        <taxon>BOP clade</taxon>
        <taxon>Oryzoideae</taxon>
        <taxon>Oryzeae</taxon>
        <taxon>Oryzinae</taxon>
        <taxon>Oryza</taxon>
        <taxon>Oryza sativa</taxon>
    </lineage>
</organism>
<reference key="1">
    <citation type="journal article" date="2002" name="Nature">
        <title>The genome sequence and structure of rice chromosome 1.</title>
        <authorList>
            <person name="Sasaki T."/>
            <person name="Matsumoto T."/>
            <person name="Yamamoto K."/>
            <person name="Sakata K."/>
            <person name="Baba T."/>
            <person name="Katayose Y."/>
            <person name="Wu J."/>
            <person name="Niimura Y."/>
            <person name="Cheng Z."/>
            <person name="Nagamura Y."/>
            <person name="Antonio B.A."/>
            <person name="Kanamori H."/>
            <person name="Hosokawa S."/>
            <person name="Masukawa M."/>
            <person name="Arikawa K."/>
            <person name="Chiden Y."/>
            <person name="Hayashi M."/>
            <person name="Okamoto M."/>
            <person name="Ando T."/>
            <person name="Aoki H."/>
            <person name="Arita K."/>
            <person name="Hamada M."/>
            <person name="Harada C."/>
            <person name="Hijishita S."/>
            <person name="Honda M."/>
            <person name="Ichikawa Y."/>
            <person name="Idonuma A."/>
            <person name="Iijima M."/>
            <person name="Ikeda M."/>
            <person name="Ikeno M."/>
            <person name="Ito S."/>
            <person name="Ito T."/>
            <person name="Ito Y."/>
            <person name="Ito Y."/>
            <person name="Iwabuchi A."/>
            <person name="Kamiya K."/>
            <person name="Karasawa W."/>
            <person name="Katagiri S."/>
            <person name="Kikuta A."/>
            <person name="Kobayashi N."/>
            <person name="Kono I."/>
            <person name="Machita K."/>
            <person name="Maehara T."/>
            <person name="Mizuno H."/>
            <person name="Mizubayashi T."/>
            <person name="Mukai Y."/>
            <person name="Nagasaki H."/>
            <person name="Nakashima M."/>
            <person name="Nakama Y."/>
            <person name="Nakamichi Y."/>
            <person name="Nakamura M."/>
            <person name="Namiki N."/>
            <person name="Negishi M."/>
            <person name="Ohta I."/>
            <person name="Ono N."/>
            <person name="Saji S."/>
            <person name="Sakai K."/>
            <person name="Shibata M."/>
            <person name="Shimokawa T."/>
            <person name="Shomura A."/>
            <person name="Song J."/>
            <person name="Takazaki Y."/>
            <person name="Terasawa K."/>
            <person name="Tsuji K."/>
            <person name="Waki K."/>
            <person name="Yamagata H."/>
            <person name="Yamane H."/>
            <person name="Yoshiki S."/>
            <person name="Yoshihara R."/>
            <person name="Yukawa K."/>
            <person name="Zhong H."/>
            <person name="Iwama H."/>
            <person name="Endo T."/>
            <person name="Ito H."/>
            <person name="Hahn J.H."/>
            <person name="Kim H.-I."/>
            <person name="Eun M.-Y."/>
            <person name="Yano M."/>
            <person name="Jiang J."/>
            <person name="Gojobori T."/>
        </authorList>
    </citation>
    <scope>NUCLEOTIDE SEQUENCE [LARGE SCALE GENOMIC DNA]</scope>
    <source>
        <strain>cv. Nipponbare</strain>
    </source>
</reference>
<reference key="2">
    <citation type="journal article" date="2005" name="Nature">
        <title>The map-based sequence of the rice genome.</title>
        <authorList>
            <consortium name="International rice genome sequencing project (IRGSP)"/>
        </authorList>
    </citation>
    <scope>NUCLEOTIDE SEQUENCE [LARGE SCALE GENOMIC DNA]</scope>
    <source>
        <strain>cv. Nipponbare</strain>
    </source>
</reference>
<reference key="3">
    <citation type="journal article" date="2008" name="Nucleic Acids Res.">
        <title>The rice annotation project database (RAP-DB): 2008 update.</title>
        <authorList>
            <consortium name="The rice annotation project (RAP)"/>
        </authorList>
    </citation>
    <scope>GENOME REANNOTATION</scope>
    <source>
        <strain>cv. Nipponbare</strain>
    </source>
</reference>
<reference key="4">
    <citation type="journal article" date="2013" name="Rice">
        <title>Improvement of the Oryza sativa Nipponbare reference genome using next generation sequence and optical map data.</title>
        <authorList>
            <person name="Kawahara Y."/>
            <person name="de la Bastide M."/>
            <person name="Hamilton J.P."/>
            <person name="Kanamori H."/>
            <person name="McCombie W.R."/>
            <person name="Ouyang S."/>
            <person name="Schwartz D.C."/>
            <person name="Tanaka T."/>
            <person name="Wu J."/>
            <person name="Zhou S."/>
            <person name="Childs K.L."/>
            <person name="Davidson R.M."/>
            <person name="Lin H."/>
            <person name="Quesada-Ocampo L."/>
            <person name="Vaillancourt B."/>
            <person name="Sakai H."/>
            <person name="Lee S.S."/>
            <person name="Kim J."/>
            <person name="Numa H."/>
            <person name="Itoh T."/>
            <person name="Buell C.R."/>
            <person name="Matsumoto T."/>
        </authorList>
    </citation>
    <scope>GENOME REANNOTATION</scope>
    <source>
        <strain>cv. Nipponbare</strain>
    </source>
</reference>
<reference key="5">
    <citation type="journal article" date="2003" name="Science">
        <title>Collection, mapping, and annotation of over 28,000 cDNA clones from japonica rice.</title>
        <authorList>
            <consortium name="The rice full-length cDNA consortium"/>
        </authorList>
    </citation>
    <scope>NUCLEOTIDE SEQUENCE [LARGE SCALE MRNA] OF 122-449</scope>
    <source>
        <strain>cv. Nipponbare</strain>
    </source>
</reference>
<reference key="6">
    <citation type="journal article" date="2006" name="Mol. Genet. Genomics">
        <title>Genome-wide analysis of cyclin family in rice (Oryza sativa L.).</title>
        <authorList>
            <person name="La H."/>
            <person name="Li J."/>
            <person name="Ji Z."/>
            <person name="Cheng Y."/>
            <person name="Li X."/>
            <person name="Jiang S."/>
            <person name="Venkatesh P.N."/>
            <person name="Ramachandran S."/>
        </authorList>
    </citation>
    <scope>GENE FAMILY</scope>
    <scope>NOMENCLATURE</scope>
</reference>
<keyword id="KW-0131">Cell cycle</keyword>
<keyword id="KW-0132">Cell division</keyword>
<keyword id="KW-0195">Cyclin</keyword>
<keyword id="KW-1185">Reference proteome</keyword>
<comment type="similarity">
    <text evidence="2">Belongs to the cyclin family. Cyclin AB subfamily.</text>
</comment>
<comment type="sequence caution" evidence="2">
    <conflict type="erroneous gene model prediction">
        <sequence resource="EMBL-CDS" id="BAF06476"/>
    </conflict>
</comment>
<sequence length="449" mass="49615">MATRSQNVAAAPQPPQNRGNVAALGKQKAVVAGRPDAKNRRALGEIGNVMNVRLPEGKPLQQAPAGRTANFGAQLLKNAQANAAANKQNAVAPAAVARPAQRQARKAPVKPAPPPPEHVIEISSDSDQSMRQQSEGSASSVRKCSRKKVINTLTSVLTARSKVACGITDKPREVIEDIDKLDGDNELAVVDYIEDIYKFYKVAENECRPCDYIDTQVEINSKMRAILADWIIEVHHKFELMPETLYLSMYVIDRYLSMQQVQRRELQLVGVSAMLIACKYEEIWAPEVNDFILISDSAYTREQILAMEKGILNKLQWNLTVPTAYVFIMRYLKAGASADNKSDKEMEHMAFFFAELALMQYGLVASLPSKVAASAVYAARLTLKKSPLWTDTLKHHTGFTESQLLDSAKLLVTSHSTAPESKLRVVYKKYSSEQLGGVALRSPAVELCK</sequence>
<gene>
    <name type="primary">CYCB1-1</name>
    <name type="ordered locus">Os01g0805600</name>
    <name type="ordered locus">LOC_Os01g59120</name>
    <name type="ORF">P0034E02.58</name>
</gene>
<name>CCB11_ORYSJ</name>
<accession>Q0JIF2</accession>
<accession>Q8LR90</accession>